<keyword id="KW-0025">Alternative splicing</keyword>
<keyword id="KW-0131">Cell cycle</keyword>
<keyword id="KW-0132">Cell division</keyword>
<keyword id="KW-0217">Developmental protein</keyword>
<keyword id="KW-0469">Meiosis</keyword>
<keyword id="KW-0498">Mitosis</keyword>
<keyword id="KW-1185">Reference proteome</keyword>
<keyword id="KW-0833">Ubl conjugation pathway</keyword>
<protein>
    <recommendedName>
        <fullName evidence="6">Anaphase-promoting complex subunit 10</fullName>
        <shortName evidence="6">APC10</shortName>
    </recommendedName>
</protein>
<dbReference type="EMBL" id="Z73972">
    <property type="protein sequence ID" value="CCE71794.1"/>
    <property type="molecule type" value="Genomic_DNA"/>
</dbReference>
<dbReference type="EMBL" id="Z73972">
    <property type="protein sequence ID" value="CCE71795.1"/>
    <property type="molecule type" value="Genomic_DNA"/>
</dbReference>
<dbReference type="EMBL" id="Z73972">
    <property type="protein sequence ID" value="CCE71796.1"/>
    <property type="molecule type" value="Genomic_DNA"/>
</dbReference>
<dbReference type="EMBL" id="Z73972">
    <property type="protein sequence ID" value="CAA98261.2"/>
    <property type="molecule type" value="Genomic_DNA"/>
</dbReference>
<dbReference type="PIR" id="T20998">
    <property type="entry name" value="T20998"/>
</dbReference>
<dbReference type="RefSeq" id="NP_001256217.1">
    <molecule id="H2L2B8-1"/>
    <property type="nucleotide sequence ID" value="NM_001269288.3"/>
</dbReference>
<dbReference type="RefSeq" id="NP_001256218.1">
    <molecule id="H2L2B8-1"/>
    <property type="nucleotide sequence ID" value="NM_001269289.4"/>
</dbReference>
<dbReference type="RefSeq" id="NP_001256219.1">
    <molecule id="H2L2B8-1"/>
    <property type="nucleotide sequence ID" value="NM_001269290.3"/>
</dbReference>
<dbReference type="RefSeq" id="NP_001256220.1">
    <molecule id="H2L2B8-2"/>
    <property type="nucleotide sequence ID" value="NM_001269291.2"/>
</dbReference>
<dbReference type="SMR" id="H2L2B8"/>
<dbReference type="ComplexPortal" id="CPX-3382">
    <property type="entry name" value="Anaphase-promoting complex"/>
</dbReference>
<dbReference type="FunCoup" id="H2L2B8">
    <property type="interactions" value="97"/>
</dbReference>
<dbReference type="STRING" id="6239.F15H10.3d.1"/>
<dbReference type="PaxDb" id="6239-F15H10.3b"/>
<dbReference type="EnsemblMetazoa" id="F15H10.3a.1">
    <molecule id="H2L2B8-2"/>
    <property type="protein sequence ID" value="F15H10.3a.1"/>
    <property type="gene ID" value="WBGene00000144"/>
</dbReference>
<dbReference type="EnsemblMetazoa" id="F15H10.3b.1">
    <molecule id="H2L2B8-1"/>
    <property type="protein sequence ID" value="F15H10.3b.1"/>
    <property type="gene ID" value="WBGene00000144"/>
</dbReference>
<dbReference type="EnsemblMetazoa" id="F15H10.3c.1">
    <molecule id="H2L2B8-1"/>
    <property type="protein sequence ID" value="F15H10.3c.1"/>
    <property type="gene ID" value="WBGene00000144"/>
</dbReference>
<dbReference type="EnsemblMetazoa" id="F15H10.3d.1">
    <molecule id="H2L2B8-1"/>
    <property type="protein sequence ID" value="F15H10.3d.1"/>
    <property type="gene ID" value="WBGene00000144"/>
</dbReference>
<dbReference type="GeneID" id="179454"/>
<dbReference type="KEGG" id="cel:CELE_F15H10.3"/>
<dbReference type="UCSC" id="F15H10.3.1">
    <property type="organism name" value="c. elegans"/>
</dbReference>
<dbReference type="AGR" id="WB:WBGene00000144"/>
<dbReference type="CTD" id="179454"/>
<dbReference type="WormBase" id="F15H10.3a">
    <molecule id="H2L2B8-2"/>
    <property type="protein sequence ID" value="CE40942"/>
    <property type="gene ID" value="WBGene00000144"/>
    <property type="gene designation" value="apc-10"/>
</dbReference>
<dbReference type="WormBase" id="F15H10.3b">
    <molecule id="H2L2B8-1"/>
    <property type="protein sequence ID" value="CE46558"/>
    <property type="gene ID" value="WBGene00000144"/>
    <property type="gene designation" value="apc-10"/>
</dbReference>
<dbReference type="WormBase" id="F15H10.3c">
    <molecule id="H2L2B8-1"/>
    <property type="protein sequence ID" value="CE46558"/>
    <property type="gene ID" value="WBGene00000144"/>
    <property type="gene designation" value="apc-10"/>
</dbReference>
<dbReference type="WormBase" id="F15H10.3d">
    <molecule id="H2L2B8-1"/>
    <property type="protein sequence ID" value="CE46558"/>
    <property type="gene ID" value="WBGene00000144"/>
    <property type="gene designation" value="apc-10"/>
</dbReference>
<dbReference type="eggNOG" id="KOG3437">
    <property type="taxonomic scope" value="Eukaryota"/>
</dbReference>
<dbReference type="GeneTree" id="ENSGT00390000013722"/>
<dbReference type="InParanoid" id="H2L2B8"/>
<dbReference type="OMA" id="HEKGRDC"/>
<dbReference type="OrthoDB" id="24948at2759"/>
<dbReference type="PhylomeDB" id="H2L2B8"/>
<dbReference type="UniPathway" id="UPA00143"/>
<dbReference type="PRO" id="PR:H2L2B8"/>
<dbReference type="Proteomes" id="UP000001940">
    <property type="component" value="Chromosome V"/>
</dbReference>
<dbReference type="Bgee" id="WBGene00000144">
    <property type="expression patterns" value="Expressed in germ line (C elegans) and 3 other cell types or tissues"/>
</dbReference>
<dbReference type="GO" id="GO:0005680">
    <property type="term" value="C:anaphase-promoting complex"/>
    <property type="evidence" value="ECO:0000318"/>
    <property type="project" value="GO_Central"/>
</dbReference>
<dbReference type="GO" id="GO:0031145">
    <property type="term" value="P:anaphase-promoting complex-dependent catabolic process"/>
    <property type="evidence" value="ECO:0000303"/>
    <property type="project" value="ComplexPortal"/>
</dbReference>
<dbReference type="GO" id="GO:0051301">
    <property type="term" value="P:cell division"/>
    <property type="evidence" value="ECO:0007669"/>
    <property type="project" value="UniProtKB-KW"/>
</dbReference>
<dbReference type="GO" id="GO:0051321">
    <property type="term" value="P:meiotic cell cycle"/>
    <property type="evidence" value="ECO:0007669"/>
    <property type="project" value="UniProtKB-KW"/>
</dbReference>
<dbReference type="GO" id="GO:0070979">
    <property type="term" value="P:protein K11-linked ubiquitination"/>
    <property type="evidence" value="ECO:0000318"/>
    <property type="project" value="GO_Central"/>
</dbReference>
<dbReference type="GO" id="GO:0051445">
    <property type="term" value="P:regulation of meiotic cell cycle"/>
    <property type="evidence" value="ECO:0000303"/>
    <property type="project" value="ComplexPortal"/>
</dbReference>
<dbReference type="GO" id="GO:0007346">
    <property type="term" value="P:regulation of mitotic cell cycle"/>
    <property type="evidence" value="ECO:0000303"/>
    <property type="project" value="ComplexPortal"/>
</dbReference>
<dbReference type="CDD" id="cd08366">
    <property type="entry name" value="APC10"/>
    <property type="match status" value="1"/>
</dbReference>
<dbReference type="Gene3D" id="2.60.120.260">
    <property type="entry name" value="Galactose-binding domain-like"/>
    <property type="match status" value="1"/>
</dbReference>
<dbReference type="InterPro" id="IPR016901">
    <property type="entry name" value="APC10/Doc1"/>
</dbReference>
<dbReference type="InterPro" id="IPR004939">
    <property type="entry name" value="APC_su10/DOC_dom"/>
</dbReference>
<dbReference type="InterPro" id="IPR008979">
    <property type="entry name" value="Galactose-bd-like_sf"/>
</dbReference>
<dbReference type="PANTHER" id="PTHR12936">
    <property type="entry name" value="ANAPHASE-PROMOTING COMPLEX 10"/>
    <property type="match status" value="1"/>
</dbReference>
<dbReference type="PANTHER" id="PTHR12936:SF0">
    <property type="entry name" value="ANAPHASE-PROMOTING COMPLEX SUBUNIT 10"/>
    <property type="match status" value="1"/>
</dbReference>
<dbReference type="Pfam" id="PF03256">
    <property type="entry name" value="ANAPC10"/>
    <property type="match status" value="1"/>
</dbReference>
<dbReference type="SMART" id="SM01337">
    <property type="entry name" value="APC10"/>
    <property type="match status" value="1"/>
</dbReference>
<dbReference type="SUPFAM" id="SSF49785">
    <property type="entry name" value="Galactose-binding domain-like"/>
    <property type="match status" value="1"/>
</dbReference>
<dbReference type="PROSITE" id="PS51284">
    <property type="entry name" value="DOC"/>
    <property type="match status" value="1"/>
</dbReference>
<organism evidence="4">
    <name type="scientific">Caenorhabditis elegans</name>
    <dbReference type="NCBI Taxonomy" id="6239"/>
    <lineage>
        <taxon>Eukaryota</taxon>
        <taxon>Metazoa</taxon>
        <taxon>Ecdysozoa</taxon>
        <taxon>Nematoda</taxon>
        <taxon>Chromadorea</taxon>
        <taxon>Rhabditida</taxon>
        <taxon>Rhabditina</taxon>
        <taxon>Rhabditomorpha</taxon>
        <taxon>Rhabditoidea</taxon>
        <taxon>Rhabditidae</taxon>
        <taxon>Peloderinae</taxon>
        <taxon>Caenorhabditis</taxon>
    </lineage>
</organism>
<proteinExistence type="inferred from homology"/>
<feature type="chain" id="PRO_0000435325" description="Anaphase-promoting complex subunit 10" evidence="3">
    <location>
        <begin position="1"/>
        <end position="212"/>
    </location>
</feature>
<feature type="domain" description="DOC" evidence="1">
    <location>
        <begin position="12"/>
        <end position="196"/>
    </location>
</feature>
<feature type="splice variant" id="VSP_058036" description="In isoform b." evidence="3">
    <location>
        <begin position="1"/>
        <end position="11"/>
    </location>
</feature>
<comment type="function">
    <text evidence="2">Probable component of the anaphase promoting complex/cyclosome (APC/C), a cell cycle-regulated E3 ubiquitin ligase that controls progression through mitosis and the G1 phase of the cell cycle. The APC/C complex acts by mediating ubiquitination and subsequent degradation of target proteins.</text>
</comment>
<comment type="pathway">
    <text evidence="3">Protein modification; protein ubiquitination.</text>
</comment>
<comment type="subunit">
    <text evidence="3">The APC/C complex is probably composed of at least 12 subunits: apc-2, apc-10, apc-11, cdc-26, emb-1, emb-27, emb-30, mat-1, mat-2, mat-3, such-1 and gfi-3.</text>
</comment>
<comment type="alternative products">
    <event type="alternative splicing"/>
    <isoform>
        <id>H2L2B8-1</id>
        <name evidence="5">a</name>
        <sequence type="displayed"/>
    </isoform>
    <isoform>
        <id>H2L2B8-2</id>
        <name evidence="6">b</name>
        <sequence type="described" ref="VSP_058036"/>
    </isoform>
</comment>
<comment type="disruption phenotype">
    <text evidence="2">RNAi-mediated knockdown results in both viable and inviable embryos, but eventually animals display germline maintenance defects and become sterile.</text>
</comment>
<comment type="similarity">
    <text evidence="3">Belongs to the APC10 family.</text>
</comment>
<sequence length="212" mass="24783">MLADHQIPEQSMDEEERTSSRGWMREFKYPSNLRDITEEARISLSSVAHCGGVDELLHESSELAWRTNMSPPHRALFTFSKKTDISYVMLFLDYSRDESYCPQEVRIDLGDGTNDWWLKMYRRVDQPKGWVKIPIHDAFGNPLRVMSLQMTIMKNHEKGRDCVVRHFRVLGPFRSRYDSMNRMILGPSAVLEARPGTEPIKDAIMNHYQSMR</sequence>
<reference evidence="4" key="1">
    <citation type="journal article" date="1998" name="Science">
        <title>Genome sequence of the nematode C. elegans: a platform for investigating biology.</title>
        <authorList>
            <consortium name="The C. elegans sequencing consortium"/>
        </authorList>
    </citation>
    <scope>NUCLEOTIDE SEQUENCE [LARGE SCALE GENOMIC DNA]</scope>
    <source>
        <strain evidence="4">Bristol N2</strain>
    </source>
</reference>
<reference evidence="3" key="2">
    <citation type="journal article" date="2002" name="Genetics">
        <title>Multiple subunits of the Caenorhabditis elegans anaphase-promoting complex are required for chromosome segregation during meiosis I.</title>
        <authorList>
            <person name="Davis E.S."/>
            <person name="Wille L."/>
            <person name="Chestnut B.A."/>
            <person name="Sadler P.L."/>
            <person name="Shakes D.C."/>
            <person name="Golden A."/>
        </authorList>
    </citation>
    <scope>FUNCTION</scope>
    <scope>DISRUPTION PHENOTYPE</scope>
</reference>
<accession>H2L2B8</accession>
<accession>Q19487</accession>
<evidence type="ECO:0000255" key="1">
    <source>
        <dbReference type="PROSITE-ProRule" id="PRU00614"/>
    </source>
</evidence>
<evidence type="ECO:0000269" key="2">
    <source>
    </source>
</evidence>
<evidence type="ECO:0000305" key="3"/>
<evidence type="ECO:0000312" key="4">
    <source>
        <dbReference type="Proteomes" id="UP000001940"/>
    </source>
</evidence>
<evidence type="ECO:0000312" key="5">
    <source>
        <dbReference type="WormBase" id="F15H10.3a"/>
    </source>
</evidence>
<evidence type="ECO:0000312" key="6">
    <source>
        <dbReference type="WormBase" id="F15H10.3b"/>
    </source>
</evidence>
<gene>
    <name evidence="6" type="primary">apc-10</name>
    <name evidence="6" type="ORF">F15H10.3</name>
</gene>
<name>APC10_CAEEL</name>